<proteinExistence type="evidence at protein level"/>
<evidence type="ECO:0000269" key="1">
    <source>
    </source>
</evidence>
<evidence type="ECO:0000305" key="2"/>
<comment type="function">
    <text>Elicits an increase in arterial blood pressure.</text>
</comment>
<comment type="subcellular location">
    <subcellularLocation>
        <location>Secreted</location>
    </subcellularLocation>
</comment>
<comment type="similarity">
    <text evidence="2">Belongs to the NPY family.</text>
</comment>
<sequence>YPPKPENPGEDAPPEELAKYYSALRHYINLITRQRY</sequence>
<dbReference type="PIR" id="A49743">
    <property type="entry name" value="A49743"/>
</dbReference>
<dbReference type="SMR" id="P69095"/>
<dbReference type="GO" id="GO:0005615">
    <property type="term" value="C:extracellular space"/>
    <property type="evidence" value="ECO:0007669"/>
    <property type="project" value="TreeGrafter"/>
</dbReference>
<dbReference type="GO" id="GO:0005184">
    <property type="term" value="F:neuropeptide hormone activity"/>
    <property type="evidence" value="ECO:0007669"/>
    <property type="project" value="TreeGrafter"/>
</dbReference>
<dbReference type="GO" id="GO:0031841">
    <property type="term" value="F:neuropeptide Y receptor binding"/>
    <property type="evidence" value="ECO:0007669"/>
    <property type="project" value="TreeGrafter"/>
</dbReference>
<dbReference type="GO" id="GO:0007631">
    <property type="term" value="P:feeding behavior"/>
    <property type="evidence" value="ECO:0007669"/>
    <property type="project" value="TreeGrafter"/>
</dbReference>
<dbReference type="GO" id="GO:0007218">
    <property type="term" value="P:neuropeptide signaling pathway"/>
    <property type="evidence" value="ECO:0007669"/>
    <property type="project" value="TreeGrafter"/>
</dbReference>
<dbReference type="CDD" id="cd00126">
    <property type="entry name" value="PAH"/>
    <property type="match status" value="1"/>
</dbReference>
<dbReference type="Gene3D" id="6.10.250.900">
    <property type="match status" value="1"/>
</dbReference>
<dbReference type="InterPro" id="IPR001955">
    <property type="entry name" value="Pancreatic_hormone-like"/>
</dbReference>
<dbReference type="InterPro" id="IPR020392">
    <property type="entry name" value="Pancreatic_hormone-like_CS"/>
</dbReference>
<dbReference type="PANTHER" id="PTHR10533">
    <property type="entry name" value="NEUROPEPTIDE Y/PANCREATIC HORMONE/PEPTIDE YY"/>
    <property type="match status" value="1"/>
</dbReference>
<dbReference type="PANTHER" id="PTHR10533:SF14">
    <property type="entry name" value="PEPTIDE YY-RELATED"/>
    <property type="match status" value="1"/>
</dbReference>
<dbReference type="Pfam" id="PF00159">
    <property type="entry name" value="Hormone_3"/>
    <property type="match status" value="1"/>
</dbReference>
<dbReference type="PRINTS" id="PR00278">
    <property type="entry name" value="PANCHORMONE"/>
</dbReference>
<dbReference type="SMART" id="SM00309">
    <property type="entry name" value="PAH"/>
    <property type="match status" value="1"/>
</dbReference>
<dbReference type="PROSITE" id="PS00265">
    <property type="entry name" value="PANCREATIC_HORMONE_1"/>
    <property type="match status" value="1"/>
</dbReference>
<dbReference type="PROSITE" id="PS50276">
    <property type="entry name" value="PANCREATIC_HORMONE_2"/>
    <property type="match status" value="1"/>
</dbReference>
<keyword id="KW-0027">Amidation</keyword>
<keyword id="KW-0903">Direct protein sequencing</keyword>
<keyword id="KW-0372">Hormone</keyword>
<keyword id="KW-0964">Secreted</keyword>
<organism>
    <name type="scientific">Scyliorhinus canicula</name>
    <name type="common">Small-spotted catshark</name>
    <name type="synonym">Squalus canicula</name>
    <dbReference type="NCBI Taxonomy" id="7830"/>
    <lineage>
        <taxon>Eukaryota</taxon>
        <taxon>Metazoa</taxon>
        <taxon>Chordata</taxon>
        <taxon>Craniata</taxon>
        <taxon>Vertebrata</taxon>
        <taxon>Chondrichthyes</taxon>
        <taxon>Elasmobranchii</taxon>
        <taxon>Galeomorphii</taxon>
        <taxon>Galeoidea</taxon>
        <taxon>Carcharhiniformes</taxon>
        <taxon>Scyliorhinidae</taxon>
        <taxon>Scyliorhinus</taxon>
    </lineage>
</organism>
<accession>P69095</accession>
<accession>P09473</accession>
<protein>
    <recommendedName>
        <fullName>Peptide YY-like</fullName>
        <shortName>PYY</shortName>
    </recommendedName>
    <alternativeName>
        <fullName>Neuropeptide Y-related peptide</fullName>
    </alternativeName>
</protein>
<name>PYY_SCYCA</name>
<feature type="peptide" id="PRO_0000044820" description="Peptide YY-like">
    <location>
        <begin position="1"/>
        <end position="36"/>
    </location>
</feature>
<feature type="modified residue" description="Tyrosine amide" evidence="1">
    <location>
        <position position="36"/>
    </location>
</feature>
<reference key="1">
    <citation type="journal article" date="1991" name="Endocrinology">
        <title>Structural characterization and biological activity of a neuropeptide Y-related peptide from the dogfish, Scyliorhinus canicula.</title>
        <authorList>
            <person name="Conlon J.M."/>
            <person name="Balasubramaniam A."/>
            <person name="Hazon N."/>
        </authorList>
    </citation>
    <scope>PROTEIN SEQUENCE</scope>
    <scope>AMIDATION AT TYR-36</scope>
    <scope>SYNTHESIS</scope>
    <source>
        <tissue>Pancreas</tissue>
    </source>
</reference>